<organism>
    <name type="scientific">Bos taurus</name>
    <name type="common">Bovine</name>
    <dbReference type="NCBI Taxonomy" id="9913"/>
    <lineage>
        <taxon>Eukaryota</taxon>
        <taxon>Metazoa</taxon>
        <taxon>Chordata</taxon>
        <taxon>Craniata</taxon>
        <taxon>Vertebrata</taxon>
        <taxon>Euteleostomi</taxon>
        <taxon>Mammalia</taxon>
        <taxon>Eutheria</taxon>
        <taxon>Laurasiatheria</taxon>
        <taxon>Artiodactyla</taxon>
        <taxon>Ruminantia</taxon>
        <taxon>Pecora</taxon>
        <taxon>Bovidae</taxon>
        <taxon>Bovinae</taxon>
        <taxon>Bos</taxon>
    </lineage>
</organism>
<reference key="1">
    <citation type="journal article" date="1994" name="J. Biol. Chem.">
        <title>Isolation and molecular cloning of prostacyclin synthase from bovine endothelial cells.</title>
        <authorList>
            <person name="Hara S."/>
            <person name="Miyata A."/>
            <person name="Yokoyama C."/>
            <person name="Inoue H."/>
            <person name="Brugger R."/>
            <person name="Lottspeich F."/>
            <person name="Ullrich V."/>
            <person name="Tanabe T."/>
        </authorList>
    </citation>
    <scope>NUCLEOTIDE SEQUENCE [MRNA]</scope>
    <scope>PARTIAL PROTEIN SEQUENCE</scope>
    <scope>FUNCTION</scope>
    <scope>CATALYTIC ACTIVITY</scope>
    <scope>SUBCELLULAR LOCATION</scope>
    <source>
        <tissue>Aorta</tissue>
    </source>
</reference>
<reference key="2">
    <citation type="journal article" date="1994" name="Biochem. Biophys. Res. Commun.">
        <title>Molecular cloning and characterization of bovine prostacyclin synthase.</title>
        <authorList>
            <person name="Pereira B."/>
            <person name="Wu K.K."/>
            <person name="Wang L.H."/>
        </authorList>
    </citation>
    <scope>NUCLEOTIDE SEQUENCE [MRNA]</scope>
    <scope>PARTIAL PROTEIN SEQUENCE</scope>
    <source>
        <tissue>Aorta</tissue>
    </source>
</reference>
<reference key="3">
    <citation type="submission" date="2006-08" db="EMBL/GenBank/DDBJ databases">
        <authorList>
            <consortium name="NIH - Mammalian Gene Collection (MGC) project"/>
        </authorList>
    </citation>
    <scope>NUCLEOTIDE SEQUENCE [LARGE SCALE MRNA]</scope>
    <source>
        <strain>Hereford</strain>
        <tissue>Fetal cerebellum</tissue>
    </source>
</reference>
<reference key="4">
    <citation type="journal article" date="1993" name="Biochem. Biophys. Res. Commun.">
        <title>Bovine prostacyclin synthase: purification and isolation of partial cDNA.</title>
        <authorList>
            <person name="Pereira B."/>
            <person name="Wu K.K."/>
            <person name="Wang L.H."/>
        </authorList>
    </citation>
    <scope>NUCLEOTIDE SEQUENCE [MRNA] OF 9-30</scope>
    <scope>PARTIAL PROTEIN SEQUENCE</scope>
    <scope>FUNCTION</scope>
    <scope>CATALYTIC ACTIVITY</scope>
    <scope>SUBCELLULAR LOCATION</scope>
    <source>
        <tissue>Aorta</tissue>
    </source>
</reference>
<name>PTGIS_BOVIN</name>
<keyword id="KW-0903">Direct protein sequencing</keyword>
<keyword id="KW-0256">Endoplasmic reticulum</keyword>
<keyword id="KW-0275">Fatty acid biosynthesis</keyword>
<keyword id="KW-0276">Fatty acid metabolism</keyword>
<keyword id="KW-0349">Heme</keyword>
<keyword id="KW-0408">Iron</keyword>
<keyword id="KW-0413">Isomerase</keyword>
<keyword id="KW-0444">Lipid biosynthesis</keyword>
<keyword id="KW-0443">Lipid metabolism</keyword>
<keyword id="KW-0456">Lyase</keyword>
<keyword id="KW-0472">Membrane</keyword>
<keyword id="KW-0479">Metal-binding</keyword>
<keyword id="KW-0643">Prostaglandin biosynthesis</keyword>
<keyword id="KW-0644">Prostaglandin metabolism</keyword>
<keyword id="KW-1185">Reference proteome</keyword>
<keyword id="KW-0812">Transmembrane</keyword>
<keyword id="KW-1133">Transmembrane helix</keyword>
<sequence length="500" mass="56629">MSWAVVFGLLAALLLLLLLTRRRTRRPGEPPLDLGSIPWLGHALEFGKDAAGFLTRMKEKHGDIFTVLVGGRHVTVLLDPHSYDAVVWEPRSRLDFHAYAVFLMERIFDVQLPHYNPGDEKSKMKPTLLHKELQALTDAMYTNLRTVLLGDTVEAGSGWHEMGLLEFSYGFLLRAGYLTQYGVEAPPHTQESQAQDRVHSADVFHTFRQLDLLLPKLARGSLSAGDKDRVGKVKGRLWKLLSPTRLASRAHRSRWLESYLLHLEEMGVSEEMQARALVLQLWATQGNMGPAAFWLLLFLLKNPEALAAVRGELETVLLGAEQPISQMTTLPQKVLDSMPVLDSVLSESLRLTAAPFITREVVADLALPMADGREFSLRRGDRLLLFPFLSPQKDPEIYTDPEVFKYNRFLNPDGSEKKDFYKDGKRLKNYSLPWGAGHNQCLGKGYAVNSIKQFVFLVLTQFDLELITPDVDIPEFDLSRYGFGLMQPEHDVPVRYRIRP</sequence>
<proteinExistence type="evidence at protein level"/>
<accession>Q29626</accession>
<accession>Q0P5G0</accession>
<accession>Q28841</accession>
<evidence type="ECO:0000250" key="1">
    <source>
        <dbReference type="UniProtKB" id="F1RE08"/>
    </source>
</evidence>
<evidence type="ECO:0000250" key="2">
    <source>
        <dbReference type="UniProtKB" id="Q16647"/>
    </source>
</evidence>
<evidence type="ECO:0000255" key="3"/>
<evidence type="ECO:0000269" key="4">
    <source>
    </source>
</evidence>
<evidence type="ECO:0000269" key="5">
    <source>
    </source>
</evidence>
<evidence type="ECO:0000303" key="6">
    <source>
    </source>
</evidence>
<evidence type="ECO:0000305" key="7"/>
<evidence type="ECO:0000305" key="8">
    <source>
    </source>
</evidence>
<evidence type="ECO:0000305" key="9">
    <source>
    </source>
</evidence>
<gene>
    <name type="primary">PTGIS</name>
    <name type="synonym">CYP8</name>
</gene>
<comment type="function">
    <text evidence="2 4 5">Catalyzes the biosynthesis and metabolism of eicosanoids. Catalyzes the isomerization of prostaglandin H2 to prostacyclin (= prostaglandin I2), a potent mediator of vasodilation and inhibitor of platelet aggregation (PubMed:8051072, PubMed:8280118). Additionally, displays dehydratase activity, toward hydroperoxyeicosatetraenoates (HPETEs), especially toward (15S)-hydroperoxy-(5Z,8Z,11Z,13E)-eicosatetraenoate (15(S)-HPETE) (By similarity).</text>
</comment>
<comment type="catalytic activity">
    <reaction evidence="4 5">
        <text>prostaglandin H2 = prostaglandin I2</text>
        <dbReference type="Rhea" id="RHEA:23580"/>
        <dbReference type="ChEBI" id="CHEBI:57403"/>
        <dbReference type="ChEBI" id="CHEBI:57405"/>
        <dbReference type="EC" id="5.3.99.4"/>
    </reaction>
    <physiologicalReaction direction="left-to-right" evidence="8 9">
        <dbReference type="Rhea" id="RHEA:23581"/>
    </physiologicalReaction>
</comment>
<comment type="catalytic activity">
    <reaction evidence="2">
        <text>a hydroperoxyeicosatetraenoate = an oxoeicosatetraenoate + H2O</text>
        <dbReference type="Rhea" id="RHEA:55556"/>
        <dbReference type="ChEBI" id="CHEBI:15377"/>
        <dbReference type="ChEBI" id="CHEBI:59720"/>
        <dbReference type="ChEBI" id="CHEBI:131859"/>
        <dbReference type="EC" id="4.2.1.152"/>
    </reaction>
    <physiologicalReaction direction="left-to-right" evidence="2">
        <dbReference type="Rhea" id="RHEA:55557"/>
    </physiologicalReaction>
</comment>
<comment type="catalytic activity">
    <reaction evidence="2">
        <text>(15S)-hydroperoxy-(5Z,8Z,11Z,13E)-eicosatetraenoate = 15-oxo-(5Z,8Z,11Z,13E)-eicosatetraenoate + H2O</text>
        <dbReference type="Rhea" id="RHEA:48636"/>
        <dbReference type="ChEBI" id="CHEBI:15377"/>
        <dbReference type="ChEBI" id="CHEBI:57410"/>
        <dbReference type="ChEBI" id="CHEBI:57446"/>
    </reaction>
</comment>
<comment type="catalytic activity">
    <reaction evidence="2">
        <text>(15S)-hydroperoxy-(5Z,8Z,11Z,13E)-eicosatetraenoate + AH2 = (15S)-hydroxy-(5Z,8Z,11Z,13E)-eicosatetraenoate + A + H2O</text>
        <dbReference type="Rhea" id="RHEA:48856"/>
        <dbReference type="ChEBI" id="CHEBI:13193"/>
        <dbReference type="ChEBI" id="CHEBI:15377"/>
        <dbReference type="ChEBI" id="CHEBI:17499"/>
        <dbReference type="ChEBI" id="CHEBI:57409"/>
        <dbReference type="ChEBI" id="CHEBI:57446"/>
    </reaction>
</comment>
<comment type="cofactor">
    <cofactor evidence="2">
        <name>heme</name>
        <dbReference type="ChEBI" id="CHEBI:30413"/>
    </cofactor>
</comment>
<comment type="subcellular location">
    <subcellularLocation>
        <location evidence="8 9">Endoplasmic reticulum membrane</location>
        <topology evidence="3">Single-pass membrane protein</topology>
    </subcellularLocation>
</comment>
<comment type="similarity">
    <text evidence="7">Belongs to the cytochrome P450 family.</text>
</comment>
<dbReference type="EC" id="5.3.99.4" evidence="4 5"/>
<dbReference type="EC" id="4.2.1.152" evidence="2"/>
<dbReference type="EMBL" id="D30718">
    <property type="protein sequence ID" value="BAA06383.1"/>
    <property type="molecule type" value="mRNA"/>
</dbReference>
<dbReference type="EMBL" id="L34208">
    <property type="protein sequence ID" value="AAA53674.1"/>
    <property type="molecule type" value="mRNA"/>
</dbReference>
<dbReference type="EMBL" id="BC120087">
    <property type="protein sequence ID" value="AAI20088.1"/>
    <property type="molecule type" value="mRNA"/>
</dbReference>
<dbReference type="EMBL" id="S67757">
    <property type="protein sequence ID" value="AAB29680.1"/>
    <property type="molecule type" value="mRNA"/>
</dbReference>
<dbReference type="PIR" id="A53658">
    <property type="entry name" value="A53658"/>
</dbReference>
<dbReference type="RefSeq" id="NP_776869.1">
    <property type="nucleotide sequence ID" value="NM_174444.1"/>
</dbReference>
<dbReference type="SMR" id="Q29626"/>
<dbReference type="FunCoup" id="Q29626">
    <property type="interactions" value="249"/>
</dbReference>
<dbReference type="STRING" id="9913.ENSBTAP00000057920"/>
<dbReference type="PaxDb" id="9913-ENSBTAP00000023313"/>
<dbReference type="GeneID" id="282021"/>
<dbReference type="KEGG" id="bta:282021"/>
<dbReference type="CTD" id="5740"/>
<dbReference type="VEuPathDB" id="HostDB:ENSBTAG00000017537"/>
<dbReference type="eggNOG" id="KOG0684">
    <property type="taxonomic scope" value="Eukaryota"/>
</dbReference>
<dbReference type="HOGENOM" id="CLU_018012_1_3_1"/>
<dbReference type="InParanoid" id="Q29626"/>
<dbReference type="OrthoDB" id="6692864at2759"/>
<dbReference type="TreeFam" id="TF105090"/>
<dbReference type="Reactome" id="R-BTA-197264">
    <property type="pathway name" value="Nicotinamide salvaging"/>
</dbReference>
<dbReference type="Reactome" id="R-BTA-211979">
    <property type="pathway name" value="Eicosanoids"/>
</dbReference>
<dbReference type="Reactome" id="R-BTA-2162123">
    <property type="pathway name" value="Synthesis of Prostaglandins (PG) and Thromboxanes (TX)"/>
</dbReference>
<dbReference type="Proteomes" id="UP000009136">
    <property type="component" value="Chromosome 13"/>
</dbReference>
<dbReference type="Bgee" id="ENSBTAG00000017537">
    <property type="expression patterns" value="Expressed in trachea and 103 other cell types or tissues"/>
</dbReference>
<dbReference type="GO" id="GO:0005901">
    <property type="term" value="C:caveola"/>
    <property type="evidence" value="ECO:0000250"/>
    <property type="project" value="UniProtKB"/>
</dbReference>
<dbReference type="GO" id="GO:0005783">
    <property type="term" value="C:endoplasmic reticulum"/>
    <property type="evidence" value="ECO:0000250"/>
    <property type="project" value="UniProtKB"/>
</dbReference>
<dbReference type="GO" id="GO:0005789">
    <property type="term" value="C:endoplasmic reticulum membrane"/>
    <property type="evidence" value="ECO:0000314"/>
    <property type="project" value="UniProtKB"/>
</dbReference>
<dbReference type="GO" id="GO:0005634">
    <property type="term" value="C:nucleus"/>
    <property type="evidence" value="ECO:0000250"/>
    <property type="project" value="UniProtKB"/>
</dbReference>
<dbReference type="GO" id="GO:0020037">
    <property type="term" value="F:heme binding"/>
    <property type="evidence" value="ECO:0000250"/>
    <property type="project" value="UniProtKB"/>
</dbReference>
<dbReference type="GO" id="GO:0106256">
    <property type="term" value="F:hydroperoxy icosatetraenoate dehydratase activity"/>
    <property type="evidence" value="ECO:0007669"/>
    <property type="project" value="UniProtKB-EC"/>
</dbReference>
<dbReference type="GO" id="GO:0005506">
    <property type="term" value="F:iron ion binding"/>
    <property type="evidence" value="ECO:0007669"/>
    <property type="project" value="InterPro"/>
</dbReference>
<dbReference type="GO" id="GO:0004497">
    <property type="term" value="F:monooxygenase activity"/>
    <property type="evidence" value="ECO:0007669"/>
    <property type="project" value="InterPro"/>
</dbReference>
<dbReference type="GO" id="GO:0016705">
    <property type="term" value="F:oxidoreductase activity, acting on paired donors, with incorporation or reduction of molecular oxygen"/>
    <property type="evidence" value="ECO:0007669"/>
    <property type="project" value="InterPro"/>
</dbReference>
<dbReference type="GO" id="GO:0008116">
    <property type="term" value="F:prostaglandin-I synthase activity"/>
    <property type="evidence" value="ECO:0000250"/>
    <property type="project" value="UniProtKB"/>
</dbReference>
<dbReference type="GO" id="GO:0071456">
    <property type="term" value="P:cellular response to hypoxia"/>
    <property type="evidence" value="ECO:0000250"/>
    <property type="project" value="UniProtKB"/>
</dbReference>
<dbReference type="GO" id="GO:0071347">
    <property type="term" value="P:cellular response to interleukin-1"/>
    <property type="evidence" value="ECO:0000250"/>
    <property type="project" value="UniProtKB"/>
</dbReference>
<dbReference type="GO" id="GO:0071354">
    <property type="term" value="P:cellular response to interleukin-6"/>
    <property type="evidence" value="ECO:0000250"/>
    <property type="project" value="UniProtKB"/>
</dbReference>
<dbReference type="GO" id="GO:0006690">
    <property type="term" value="P:icosanoid metabolic process"/>
    <property type="evidence" value="ECO:0000250"/>
    <property type="project" value="UniProtKB"/>
</dbReference>
<dbReference type="GO" id="GO:0050728">
    <property type="term" value="P:negative regulation of inflammatory response"/>
    <property type="evidence" value="ECO:0000250"/>
    <property type="project" value="UniProtKB"/>
</dbReference>
<dbReference type="GO" id="GO:0045019">
    <property type="term" value="P:negative regulation of nitric oxide biosynthetic process"/>
    <property type="evidence" value="ECO:0000250"/>
    <property type="project" value="UniProtKB"/>
</dbReference>
<dbReference type="GO" id="GO:0045766">
    <property type="term" value="P:positive regulation of angiogenesis"/>
    <property type="evidence" value="ECO:0000250"/>
    <property type="project" value="UniProtKB"/>
</dbReference>
<dbReference type="GO" id="GO:1900119">
    <property type="term" value="P:positive regulation of execution phase of apoptosis"/>
    <property type="evidence" value="ECO:0000250"/>
    <property type="project" value="UniProtKB"/>
</dbReference>
<dbReference type="GO" id="GO:0035360">
    <property type="term" value="P:positive regulation of peroxisome proliferator activated receptor signaling pathway"/>
    <property type="evidence" value="ECO:0000250"/>
    <property type="project" value="UniProtKB"/>
</dbReference>
<dbReference type="GO" id="GO:0001516">
    <property type="term" value="P:prostaglandin biosynthetic process"/>
    <property type="evidence" value="ECO:0000250"/>
    <property type="project" value="UniProtKB"/>
</dbReference>
<dbReference type="CDD" id="cd20634">
    <property type="entry name" value="PGIS_CYP8A1"/>
    <property type="match status" value="1"/>
</dbReference>
<dbReference type="FunFam" id="1.10.630.10:FF:000025">
    <property type="entry name" value="Prostaglandin I2 (prostacyclin) synthase"/>
    <property type="match status" value="1"/>
</dbReference>
<dbReference type="Gene3D" id="1.10.630.10">
    <property type="entry name" value="Cytochrome P450"/>
    <property type="match status" value="1"/>
</dbReference>
<dbReference type="InterPro" id="IPR001128">
    <property type="entry name" value="Cyt_P450"/>
</dbReference>
<dbReference type="InterPro" id="IPR024204">
    <property type="entry name" value="Cyt_P450_CYP7A1-type"/>
</dbReference>
<dbReference type="InterPro" id="IPR002403">
    <property type="entry name" value="Cyt_P450_E_grp-IV"/>
</dbReference>
<dbReference type="InterPro" id="IPR036396">
    <property type="entry name" value="Cyt_P450_sf"/>
</dbReference>
<dbReference type="InterPro" id="IPR027286">
    <property type="entry name" value="PTGIS"/>
</dbReference>
<dbReference type="PANTHER" id="PTHR24306">
    <property type="match status" value="1"/>
</dbReference>
<dbReference type="PANTHER" id="PTHR24306:SF4">
    <property type="entry name" value="PROSTACYCLIN SYNTHASE"/>
    <property type="match status" value="1"/>
</dbReference>
<dbReference type="Pfam" id="PF00067">
    <property type="entry name" value="p450"/>
    <property type="match status" value="1"/>
</dbReference>
<dbReference type="PIRSF" id="PIRSF000047">
    <property type="entry name" value="Cytochrome_CYPVIIA1"/>
    <property type="match status" value="1"/>
</dbReference>
<dbReference type="PIRSF" id="PIRSF500628">
    <property type="entry name" value="PTGIS"/>
    <property type="match status" value="1"/>
</dbReference>
<dbReference type="PRINTS" id="PR00465">
    <property type="entry name" value="EP450IV"/>
</dbReference>
<dbReference type="SUPFAM" id="SSF48264">
    <property type="entry name" value="Cytochrome P450"/>
    <property type="match status" value="1"/>
</dbReference>
<feature type="chain" id="PRO_0000051909" description="Prostacyclin synthase">
    <location>
        <begin position="1"/>
        <end position="500"/>
    </location>
</feature>
<feature type="transmembrane region" description="Helical" evidence="3">
    <location>
        <begin position="1"/>
        <end position="20"/>
    </location>
</feature>
<feature type="binding site" evidence="1">
    <location>
        <position position="106"/>
    </location>
    <ligand>
        <name>substrate</name>
    </ligand>
</feature>
<feature type="binding site" evidence="1">
    <location>
        <position position="112"/>
    </location>
    <ligand>
        <name>substrate</name>
    </ligand>
</feature>
<feature type="binding site" evidence="1">
    <location>
        <position position="287"/>
    </location>
    <ligand>
        <name>substrate</name>
    </ligand>
</feature>
<feature type="binding site" evidence="1">
    <location>
        <begin position="358"/>
        <end position="359"/>
    </location>
    <ligand>
        <name>substrate</name>
    </ligand>
</feature>
<feature type="binding site" evidence="1">
    <location>
        <position position="382"/>
    </location>
    <ligand>
        <name>substrate</name>
    </ligand>
</feature>
<feature type="binding site" description="axial binding residue" evidence="2">
    <location>
        <position position="441"/>
    </location>
    <ligand>
        <name>heme</name>
        <dbReference type="ChEBI" id="CHEBI:30413"/>
    </ligand>
    <ligandPart>
        <name>Fe</name>
        <dbReference type="ChEBI" id="CHEBI:18248"/>
    </ligandPart>
</feature>
<feature type="sequence conflict" description="In Ref. 2; AAA53674." evidence="7" ref="2">
    <original>S</original>
    <variation>N</variation>
    <location>
        <position position="192"/>
    </location>
</feature>
<feature type="sequence conflict" description="In Ref. 2; AAA53674." evidence="7" ref="2">
    <original>A</original>
    <variation>P</variation>
    <location>
        <position position="353"/>
    </location>
</feature>
<feature type="sequence conflict" description="In Ref. 2; AAA53674." evidence="7" ref="2">
    <original>N</original>
    <variation>T</variation>
    <location>
        <position position="407"/>
    </location>
</feature>
<protein>
    <recommendedName>
        <fullName evidence="6">Prostacyclin synthase</fullName>
        <ecNumber evidence="4 5">5.3.99.4</ecNumber>
    </recommendedName>
    <alternativeName>
        <fullName>Hydroperoxy icosatetraenoate dehydratase</fullName>
        <ecNumber evidence="2">4.2.1.152</ecNumber>
    </alternativeName>
    <alternativeName>
        <fullName>Prostaglandin I2 synthase</fullName>
    </alternativeName>
</protein>